<accession>Q6ZVH7</accession>
<accession>Q66K27</accession>
<accession>Q6ZVG1</accession>
<accession>Q8IVU2</accession>
<sequence length="1005" mass="108132">MEKQRALVAAKDGDVATLERLLEAGALGPGITDALGAGLVHHATRAGHLDCVKFLVQRAQLPGNQRAHNGATPAHDAAATGSLAELCWLVREGGCGLQDQDASGVSPLHLAARFGHPVLVEWLLHEGHSATLETREGARPLHHAAVSGDLTCLKLLTAAHGSSVNRRTRSGASPLYLACQEGHLHLAQFLVKDCGADVHLRALDGMSALHAAAARGHYSLVVWLVTFTDIGLTARDNEGATALHFAARGGHTPILDRLLLMGTPILRDSWGGTPLHDAAENGQMECCQTLVSHHVDPSLRDEDGYTAADLAEYHGHRDCAQYLREVAQPVPLLMTPPPPPFPPPPLLATRRSLEDGRRGGPGPGNPSPMSLSPAWPGHPDQPLPREQMTSPAPPRIITSATADPEGTETALAGDTSDGLAALQLDGLPSGDIDGLVPTRDERGQPIPEWKRQVMVRKLQARLGAESSAEAQDNGGSSGPTEQAAWRYSQTHQAILGPFGELLTEDDLVYLEKQIADLQLRRRCQEYESELGRLAAELQALLPEPLVSITVNSHFLPRAPGLEVEEASIPAAEPAGSAEASEVAPGVQPLPFWCSHISRLVRSLSLLLKGVHGLVQGDEKPSTRPLQDTCREASASPPRSEAQRQIQEWGVSVRTLRGNFESASGPLCGFNPGPCEPGAQHRQCLSGCWPALPKPRSGLASGEPRPGDTEEASDSGISCEEVPSEAGAAAGPDLASLRKERIIMLFLSHWRRSAYTPALKTVACRTLGARHAGLRGQEAARSPGPPSPPSEGPRLGHLWQQRSTITHLLGNWKAIMAHVPARQLRRLSRQPRGALSPEQFLPHVDGAPVPYSSLSLDLFMLGYFQLLECDLPAEERKLRHLLCFEVFEHLGTHGWEAVRAFHKAVTDEVAAGRRAWTDGFEDIKARFFGSSQRPAWDTEPGRKSGLTLLGPLPHAAVPCSGPEPTAQRLGSRSQQGSFNGEDICGYINRSFAFWKEKEAEMFNFGE</sequence>
<gene>
    <name type="primary">ESPNL</name>
</gene>
<dbReference type="EMBL" id="AK124559">
    <property type="protein sequence ID" value="BAC85884.1"/>
    <property type="molecule type" value="mRNA"/>
</dbReference>
<dbReference type="EMBL" id="AK124612">
    <property type="protein sequence ID" value="BAC85900.1"/>
    <property type="molecule type" value="mRNA"/>
</dbReference>
<dbReference type="EMBL" id="AC016757">
    <property type="status" value="NOT_ANNOTATED_CDS"/>
    <property type="molecule type" value="Genomic_DNA"/>
</dbReference>
<dbReference type="EMBL" id="BC042051">
    <property type="protein sequence ID" value="AAH42051.1"/>
    <property type="molecule type" value="mRNA"/>
</dbReference>
<dbReference type="EMBL" id="BC080639">
    <property type="protein sequence ID" value="AAH80639.1"/>
    <property type="molecule type" value="mRNA"/>
</dbReference>
<dbReference type="CCDS" id="CCDS2525.1">
    <molecule id="Q6ZVH7-1"/>
</dbReference>
<dbReference type="CCDS" id="CCDS77547.1">
    <molecule id="Q6ZVH7-3"/>
</dbReference>
<dbReference type="RefSeq" id="NP_001295299.1">
    <molecule id="Q6ZVH7-3"/>
    <property type="nucleotide sequence ID" value="NM_001308370.2"/>
</dbReference>
<dbReference type="RefSeq" id="NP_919288.2">
    <molecule id="Q6ZVH7-1"/>
    <property type="nucleotide sequence ID" value="NM_194312.4"/>
</dbReference>
<dbReference type="SMR" id="Q6ZVH7"/>
<dbReference type="BioGRID" id="130929">
    <property type="interactions" value="4"/>
</dbReference>
<dbReference type="FunCoup" id="Q6ZVH7">
    <property type="interactions" value="13"/>
</dbReference>
<dbReference type="IntAct" id="Q6ZVH7">
    <property type="interactions" value="4"/>
</dbReference>
<dbReference type="STRING" id="9606.ENSP00000339115"/>
<dbReference type="iPTMnet" id="Q6ZVH7"/>
<dbReference type="PhosphoSitePlus" id="Q6ZVH7"/>
<dbReference type="BioMuta" id="ESPNL"/>
<dbReference type="DMDM" id="296439358"/>
<dbReference type="jPOST" id="Q6ZVH7"/>
<dbReference type="MassIVE" id="Q6ZVH7"/>
<dbReference type="PaxDb" id="9606-ENSP00000339115"/>
<dbReference type="PeptideAtlas" id="Q6ZVH7"/>
<dbReference type="ProteomicsDB" id="68416">
    <molecule id="Q6ZVH7-1"/>
</dbReference>
<dbReference type="ProteomicsDB" id="68417">
    <molecule id="Q6ZVH7-2"/>
</dbReference>
<dbReference type="ProteomicsDB" id="68418">
    <molecule id="Q6ZVH7-3"/>
</dbReference>
<dbReference type="Antibodypedia" id="66046">
    <property type="antibodies" value="68 antibodies from 12 providers"/>
</dbReference>
<dbReference type="DNASU" id="339768"/>
<dbReference type="Ensembl" id="ENST00000343063.8">
    <molecule id="Q6ZVH7-1"/>
    <property type="protein sequence ID" value="ENSP00000339115.3"/>
    <property type="gene ID" value="ENSG00000144488.15"/>
</dbReference>
<dbReference type="Ensembl" id="ENST00000409169.5">
    <molecule id="Q6ZVH7-2"/>
    <property type="protein sequence ID" value="ENSP00000386577.1"/>
    <property type="gene ID" value="ENSG00000144488.15"/>
</dbReference>
<dbReference type="Ensembl" id="ENST00000409506.1">
    <molecule id="Q6ZVH7-3"/>
    <property type="protein sequence ID" value="ENSP00000386579.1"/>
    <property type="gene ID" value="ENSG00000144488.15"/>
</dbReference>
<dbReference type="GeneID" id="339768"/>
<dbReference type="KEGG" id="hsa:339768"/>
<dbReference type="MANE-Select" id="ENST00000343063.8">
    <property type="protein sequence ID" value="ENSP00000339115.3"/>
    <property type="RefSeq nucleotide sequence ID" value="NM_194312.4"/>
    <property type="RefSeq protein sequence ID" value="NP_919288.2"/>
</dbReference>
<dbReference type="UCSC" id="uc002vxq.5">
    <molecule id="Q6ZVH7-1"/>
    <property type="organism name" value="human"/>
</dbReference>
<dbReference type="AGR" id="HGNC:27937"/>
<dbReference type="CTD" id="339768"/>
<dbReference type="DisGeNET" id="339768"/>
<dbReference type="GeneCards" id="ESPNL"/>
<dbReference type="HGNC" id="HGNC:27937">
    <property type="gene designation" value="ESPNL"/>
</dbReference>
<dbReference type="HPA" id="ENSG00000144488">
    <property type="expression patterns" value="Tissue enhanced (brain, intestine)"/>
</dbReference>
<dbReference type="MIM" id="619974">
    <property type="type" value="gene"/>
</dbReference>
<dbReference type="neXtProt" id="NX_Q6ZVH7"/>
<dbReference type="OpenTargets" id="ENSG00000144488"/>
<dbReference type="PharmGKB" id="PA162385421"/>
<dbReference type="VEuPathDB" id="HostDB:ENSG00000144488"/>
<dbReference type="eggNOG" id="KOG0504">
    <property type="taxonomic scope" value="Eukaryota"/>
</dbReference>
<dbReference type="GeneTree" id="ENSGT00940000156970"/>
<dbReference type="HOGENOM" id="CLU_017253_0_0_1"/>
<dbReference type="InParanoid" id="Q6ZVH7"/>
<dbReference type="OMA" id="NGQLECC"/>
<dbReference type="OrthoDB" id="10261302at2759"/>
<dbReference type="PAN-GO" id="Q6ZVH7">
    <property type="GO annotations" value="3 GO annotations based on evolutionary models"/>
</dbReference>
<dbReference type="PhylomeDB" id="Q6ZVH7"/>
<dbReference type="TreeFam" id="TF326392"/>
<dbReference type="PathwayCommons" id="Q6ZVH7"/>
<dbReference type="Reactome" id="R-HSA-9662360">
    <property type="pathway name" value="Sensory processing of sound by inner hair cells of the cochlea"/>
</dbReference>
<dbReference type="Reactome" id="R-HSA-9662361">
    <property type="pathway name" value="Sensory processing of sound by outer hair cells of the cochlea"/>
</dbReference>
<dbReference type="SignaLink" id="Q6ZVH7"/>
<dbReference type="BioGRID-ORCS" id="339768">
    <property type="hits" value="9 hits in 1143 CRISPR screens"/>
</dbReference>
<dbReference type="ChiTaRS" id="ESPNL">
    <property type="organism name" value="human"/>
</dbReference>
<dbReference type="GenomeRNAi" id="339768"/>
<dbReference type="Pharos" id="Q6ZVH7">
    <property type="development level" value="Tdark"/>
</dbReference>
<dbReference type="PRO" id="PR:Q6ZVH7"/>
<dbReference type="Proteomes" id="UP000005640">
    <property type="component" value="Chromosome 2"/>
</dbReference>
<dbReference type="RNAct" id="Q6ZVH7">
    <property type="molecule type" value="protein"/>
</dbReference>
<dbReference type="Bgee" id="ENSG00000144488">
    <property type="expression patterns" value="Expressed in right hemisphere of cerebellum and 112 other cell types or tissues"/>
</dbReference>
<dbReference type="ExpressionAtlas" id="Q6ZVH7">
    <property type="expression patterns" value="baseline and differential"/>
</dbReference>
<dbReference type="GO" id="GO:0005737">
    <property type="term" value="C:cytoplasm"/>
    <property type="evidence" value="ECO:0000318"/>
    <property type="project" value="GO_Central"/>
</dbReference>
<dbReference type="GO" id="GO:0032426">
    <property type="term" value="C:stereocilium tip"/>
    <property type="evidence" value="ECO:0000250"/>
    <property type="project" value="UniProtKB"/>
</dbReference>
<dbReference type="GO" id="GO:0051015">
    <property type="term" value="F:actin filament binding"/>
    <property type="evidence" value="ECO:0000250"/>
    <property type="project" value="UniProtKB"/>
</dbReference>
<dbReference type="GO" id="GO:0051017">
    <property type="term" value="P:actin filament bundle assembly"/>
    <property type="evidence" value="ECO:0000318"/>
    <property type="project" value="GO_Central"/>
</dbReference>
<dbReference type="GO" id="GO:0007605">
    <property type="term" value="P:sensory perception of sound"/>
    <property type="evidence" value="ECO:0000250"/>
    <property type="project" value="UniProtKB"/>
</dbReference>
<dbReference type="FunFam" id="1.25.40.20:FF:000268">
    <property type="entry name" value="Espin like"/>
    <property type="match status" value="1"/>
</dbReference>
<dbReference type="FunFam" id="1.25.40.20:FF:000295">
    <property type="entry name" value="Espin like"/>
    <property type="match status" value="1"/>
</dbReference>
<dbReference type="FunFam" id="1.25.40.20:FF:000255">
    <property type="entry name" value="espin-like protein"/>
    <property type="match status" value="1"/>
</dbReference>
<dbReference type="Gene3D" id="1.25.40.20">
    <property type="entry name" value="Ankyrin repeat-containing domain"/>
    <property type="match status" value="3"/>
</dbReference>
<dbReference type="InterPro" id="IPR002110">
    <property type="entry name" value="Ankyrin_rpt"/>
</dbReference>
<dbReference type="InterPro" id="IPR036770">
    <property type="entry name" value="Ankyrin_rpt-contain_sf"/>
</dbReference>
<dbReference type="InterPro" id="IPR052420">
    <property type="entry name" value="Espin/Espin-like"/>
</dbReference>
<dbReference type="PANTHER" id="PTHR24153">
    <property type="entry name" value="ESPIN"/>
    <property type="match status" value="1"/>
</dbReference>
<dbReference type="PANTHER" id="PTHR24153:SF0">
    <property type="entry name" value="ESPIN-LIKE PROTEIN"/>
    <property type="match status" value="1"/>
</dbReference>
<dbReference type="Pfam" id="PF00023">
    <property type="entry name" value="Ank"/>
    <property type="match status" value="1"/>
</dbReference>
<dbReference type="Pfam" id="PF12796">
    <property type="entry name" value="Ank_2"/>
    <property type="match status" value="3"/>
</dbReference>
<dbReference type="SMART" id="SM00248">
    <property type="entry name" value="ANK"/>
    <property type="match status" value="10"/>
</dbReference>
<dbReference type="SUPFAM" id="SSF48403">
    <property type="entry name" value="Ankyrin repeat"/>
    <property type="match status" value="2"/>
</dbReference>
<dbReference type="PROSITE" id="PS50297">
    <property type="entry name" value="ANK_REP_REGION"/>
    <property type="match status" value="1"/>
</dbReference>
<dbReference type="PROSITE" id="PS50088">
    <property type="entry name" value="ANK_REPEAT"/>
    <property type="match status" value="6"/>
</dbReference>
<reference key="1">
    <citation type="journal article" date="2004" name="Nat. Genet.">
        <title>Complete sequencing and characterization of 21,243 full-length human cDNAs.</title>
        <authorList>
            <person name="Ota T."/>
            <person name="Suzuki Y."/>
            <person name="Nishikawa T."/>
            <person name="Otsuki T."/>
            <person name="Sugiyama T."/>
            <person name="Irie R."/>
            <person name="Wakamatsu A."/>
            <person name="Hayashi K."/>
            <person name="Sato H."/>
            <person name="Nagai K."/>
            <person name="Kimura K."/>
            <person name="Makita H."/>
            <person name="Sekine M."/>
            <person name="Obayashi M."/>
            <person name="Nishi T."/>
            <person name="Shibahara T."/>
            <person name="Tanaka T."/>
            <person name="Ishii S."/>
            <person name="Yamamoto J."/>
            <person name="Saito K."/>
            <person name="Kawai Y."/>
            <person name="Isono Y."/>
            <person name="Nakamura Y."/>
            <person name="Nagahari K."/>
            <person name="Murakami K."/>
            <person name="Yasuda T."/>
            <person name="Iwayanagi T."/>
            <person name="Wagatsuma M."/>
            <person name="Shiratori A."/>
            <person name="Sudo H."/>
            <person name="Hosoiri T."/>
            <person name="Kaku Y."/>
            <person name="Kodaira H."/>
            <person name="Kondo H."/>
            <person name="Sugawara M."/>
            <person name="Takahashi M."/>
            <person name="Kanda K."/>
            <person name="Yokoi T."/>
            <person name="Furuya T."/>
            <person name="Kikkawa E."/>
            <person name="Omura Y."/>
            <person name="Abe K."/>
            <person name="Kamihara K."/>
            <person name="Katsuta N."/>
            <person name="Sato K."/>
            <person name="Tanikawa M."/>
            <person name="Yamazaki M."/>
            <person name="Ninomiya K."/>
            <person name="Ishibashi T."/>
            <person name="Yamashita H."/>
            <person name="Murakawa K."/>
            <person name="Fujimori K."/>
            <person name="Tanai H."/>
            <person name="Kimata M."/>
            <person name="Watanabe M."/>
            <person name="Hiraoka S."/>
            <person name="Chiba Y."/>
            <person name="Ishida S."/>
            <person name="Ono Y."/>
            <person name="Takiguchi S."/>
            <person name="Watanabe S."/>
            <person name="Yosida M."/>
            <person name="Hotuta T."/>
            <person name="Kusano J."/>
            <person name="Kanehori K."/>
            <person name="Takahashi-Fujii A."/>
            <person name="Hara H."/>
            <person name="Tanase T.-O."/>
            <person name="Nomura Y."/>
            <person name="Togiya S."/>
            <person name="Komai F."/>
            <person name="Hara R."/>
            <person name="Takeuchi K."/>
            <person name="Arita M."/>
            <person name="Imose N."/>
            <person name="Musashino K."/>
            <person name="Yuuki H."/>
            <person name="Oshima A."/>
            <person name="Sasaki N."/>
            <person name="Aotsuka S."/>
            <person name="Yoshikawa Y."/>
            <person name="Matsunawa H."/>
            <person name="Ichihara T."/>
            <person name="Shiohata N."/>
            <person name="Sano S."/>
            <person name="Moriya S."/>
            <person name="Momiyama H."/>
            <person name="Satoh N."/>
            <person name="Takami S."/>
            <person name="Terashima Y."/>
            <person name="Suzuki O."/>
            <person name="Nakagawa S."/>
            <person name="Senoh A."/>
            <person name="Mizoguchi H."/>
            <person name="Goto Y."/>
            <person name="Shimizu F."/>
            <person name="Wakebe H."/>
            <person name="Hishigaki H."/>
            <person name="Watanabe T."/>
            <person name="Sugiyama A."/>
            <person name="Takemoto M."/>
            <person name="Kawakami B."/>
            <person name="Yamazaki M."/>
            <person name="Watanabe K."/>
            <person name="Kumagai A."/>
            <person name="Itakura S."/>
            <person name="Fukuzumi Y."/>
            <person name="Fujimori Y."/>
            <person name="Komiyama M."/>
            <person name="Tashiro H."/>
            <person name="Tanigami A."/>
            <person name="Fujiwara T."/>
            <person name="Ono T."/>
            <person name="Yamada K."/>
            <person name="Fujii Y."/>
            <person name="Ozaki K."/>
            <person name="Hirao M."/>
            <person name="Ohmori Y."/>
            <person name="Kawabata A."/>
            <person name="Hikiji T."/>
            <person name="Kobatake N."/>
            <person name="Inagaki H."/>
            <person name="Ikema Y."/>
            <person name="Okamoto S."/>
            <person name="Okitani R."/>
            <person name="Kawakami T."/>
            <person name="Noguchi S."/>
            <person name="Itoh T."/>
            <person name="Shigeta K."/>
            <person name="Senba T."/>
            <person name="Matsumura K."/>
            <person name="Nakajima Y."/>
            <person name="Mizuno T."/>
            <person name="Morinaga M."/>
            <person name="Sasaki M."/>
            <person name="Togashi T."/>
            <person name="Oyama M."/>
            <person name="Hata H."/>
            <person name="Watanabe M."/>
            <person name="Komatsu T."/>
            <person name="Mizushima-Sugano J."/>
            <person name="Satoh T."/>
            <person name="Shirai Y."/>
            <person name="Takahashi Y."/>
            <person name="Nakagawa K."/>
            <person name="Okumura K."/>
            <person name="Nagase T."/>
            <person name="Nomura N."/>
            <person name="Kikuchi H."/>
            <person name="Masuho Y."/>
            <person name="Yamashita R."/>
            <person name="Nakai K."/>
            <person name="Yada T."/>
            <person name="Nakamura Y."/>
            <person name="Ohara O."/>
            <person name="Isogai T."/>
            <person name="Sugano S."/>
        </authorList>
    </citation>
    <scope>NUCLEOTIDE SEQUENCE [LARGE SCALE MRNA] (ISOFORM 1)</scope>
    <scope>VARIANTS VAL-568; SER-574; ALA-761 AND ARG-829</scope>
    <source>
        <tissue>Cerebellum</tissue>
    </source>
</reference>
<reference key="2">
    <citation type="journal article" date="2005" name="Nature">
        <title>Generation and annotation of the DNA sequences of human chromosomes 2 and 4.</title>
        <authorList>
            <person name="Hillier L.W."/>
            <person name="Graves T.A."/>
            <person name="Fulton R.S."/>
            <person name="Fulton L.A."/>
            <person name="Pepin K.H."/>
            <person name="Minx P."/>
            <person name="Wagner-McPherson C."/>
            <person name="Layman D."/>
            <person name="Wylie K."/>
            <person name="Sekhon M."/>
            <person name="Becker M.C."/>
            <person name="Fewell G.A."/>
            <person name="Delehaunty K.D."/>
            <person name="Miner T.L."/>
            <person name="Nash W.E."/>
            <person name="Kremitzki C."/>
            <person name="Oddy L."/>
            <person name="Du H."/>
            <person name="Sun H."/>
            <person name="Bradshaw-Cordum H."/>
            <person name="Ali J."/>
            <person name="Carter J."/>
            <person name="Cordes M."/>
            <person name="Harris A."/>
            <person name="Isak A."/>
            <person name="van Brunt A."/>
            <person name="Nguyen C."/>
            <person name="Du F."/>
            <person name="Courtney L."/>
            <person name="Kalicki J."/>
            <person name="Ozersky P."/>
            <person name="Abbott S."/>
            <person name="Armstrong J."/>
            <person name="Belter E.A."/>
            <person name="Caruso L."/>
            <person name="Cedroni M."/>
            <person name="Cotton M."/>
            <person name="Davidson T."/>
            <person name="Desai A."/>
            <person name="Elliott G."/>
            <person name="Erb T."/>
            <person name="Fronick C."/>
            <person name="Gaige T."/>
            <person name="Haakenson W."/>
            <person name="Haglund K."/>
            <person name="Holmes A."/>
            <person name="Harkins R."/>
            <person name="Kim K."/>
            <person name="Kruchowski S.S."/>
            <person name="Strong C.M."/>
            <person name="Grewal N."/>
            <person name="Goyea E."/>
            <person name="Hou S."/>
            <person name="Levy A."/>
            <person name="Martinka S."/>
            <person name="Mead K."/>
            <person name="McLellan M.D."/>
            <person name="Meyer R."/>
            <person name="Randall-Maher J."/>
            <person name="Tomlinson C."/>
            <person name="Dauphin-Kohlberg S."/>
            <person name="Kozlowicz-Reilly A."/>
            <person name="Shah N."/>
            <person name="Swearengen-Shahid S."/>
            <person name="Snider J."/>
            <person name="Strong J.T."/>
            <person name="Thompson J."/>
            <person name="Yoakum M."/>
            <person name="Leonard S."/>
            <person name="Pearman C."/>
            <person name="Trani L."/>
            <person name="Radionenko M."/>
            <person name="Waligorski J.E."/>
            <person name="Wang C."/>
            <person name="Rock S.M."/>
            <person name="Tin-Wollam A.-M."/>
            <person name="Maupin R."/>
            <person name="Latreille P."/>
            <person name="Wendl M.C."/>
            <person name="Yang S.-P."/>
            <person name="Pohl C."/>
            <person name="Wallis J.W."/>
            <person name="Spieth J."/>
            <person name="Bieri T.A."/>
            <person name="Berkowicz N."/>
            <person name="Nelson J.O."/>
            <person name="Osborne J."/>
            <person name="Ding L."/>
            <person name="Meyer R."/>
            <person name="Sabo A."/>
            <person name="Shotland Y."/>
            <person name="Sinha P."/>
            <person name="Wohldmann P.E."/>
            <person name="Cook L.L."/>
            <person name="Hickenbotham M.T."/>
            <person name="Eldred J."/>
            <person name="Williams D."/>
            <person name="Jones T.A."/>
            <person name="She X."/>
            <person name="Ciccarelli F.D."/>
            <person name="Izaurralde E."/>
            <person name="Taylor J."/>
            <person name="Schmutz J."/>
            <person name="Myers R.M."/>
            <person name="Cox D.R."/>
            <person name="Huang X."/>
            <person name="McPherson J.D."/>
            <person name="Mardis E.R."/>
            <person name="Clifton S.W."/>
            <person name="Warren W.C."/>
            <person name="Chinwalla A.T."/>
            <person name="Eddy S.R."/>
            <person name="Marra M.A."/>
            <person name="Ovcharenko I."/>
            <person name="Furey T.S."/>
            <person name="Miller W."/>
            <person name="Eichler E.E."/>
            <person name="Bork P."/>
            <person name="Suyama M."/>
            <person name="Torrents D."/>
            <person name="Waterston R.H."/>
            <person name="Wilson R.K."/>
        </authorList>
    </citation>
    <scope>NUCLEOTIDE SEQUENCE [LARGE SCALE GENOMIC DNA]</scope>
</reference>
<reference key="3">
    <citation type="journal article" date="2004" name="Genome Res.">
        <title>The status, quality, and expansion of the NIH full-length cDNA project: the Mammalian Gene Collection (MGC).</title>
        <authorList>
            <consortium name="The MGC Project Team"/>
        </authorList>
    </citation>
    <scope>NUCLEOTIDE SEQUENCE [LARGE SCALE MRNA] (ISOFORM 3)</scope>
    <scope>NUCLEOTIDE SEQUENCE [LARGE SCALE MRNA] OF 257-1005 (ISOFORM 2)</scope>
    <scope>VARIANTS VAL-568; SER-574 AND ALA-761</scope>
    <source>
        <tissue>Lymph</tissue>
        <tissue>Ovary</tissue>
    </source>
</reference>
<protein>
    <recommendedName>
        <fullName>Espin-like protein</fullName>
    </recommendedName>
</protein>
<name>ESPNL_HUMAN</name>
<proteinExistence type="evidence at protein level"/>
<comment type="function">
    <text evidence="1">Binds to but does not cross-link actin. Required for the formation and maintenance of inner ear hair cell stereocilia and staircase formation. Essential for normal hearing.</text>
</comment>
<comment type="subunit">
    <text evidence="1">Interacts with MYO3A (via C-terminus). Interacts with MYO3B (via C-terminus).</text>
</comment>
<comment type="interaction">
    <interactant intactId="EBI-12831272">
        <id>Q6ZVH7</id>
    </interactant>
    <interactant intactId="EBI-747813">
        <id>Q5SW96</id>
        <label>LDLRAP1</label>
    </interactant>
    <organismsDiffer>false</organismsDiffer>
    <experiments>3</experiments>
</comment>
<comment type="interaction">
    <interactant intactId="EBI-12831272">
        <id>Q6ZVH7</id>
    </interactant>
    <interactant intactId="EBI-357275">
        <id>Q99471</id>
        <label>PFDN5</label>
    </interactant>
    <organismsDiffer>false</organismsDiffer>
    <experiments>3</experiments>
</comment>
<comment type="interaction">
    <interactant intactId="EBI-12831272">
        <id>Q6ZVH7</id>
    </interactant>
    <interactant intactId="EBI-2822051">
        <id>Q14140</id>
        <label>SERTAD2</label>
    </interactant>
    <organismsDiffer>false</organismsDiffer>
    <experiments>3</experiments>
</comment>
<comment type="subcellular location">
    <subcellularLocation>
        <location evidence="1">Cell projection</location>
        <location evidence="1">Stereocilium</location>
    </subcellularLocation>
</comment>
<comment type="alternative products">
    <event type="alternative splicing"/>
    <isoform>
        <id>Q6ZVH7-1</id>
        <name>1</name>
        <sequence type="displayed"/>
    </isoform>
    <isoform>
        <id>Q6ZVH7-2</id>
        <name>2</name>
        <sequence type="described" ref="VSP_029859"/>
    </isoform>
    <isoform>
        <id>Q6ZVH7-3</id>
        <name>3</name>
        <sequence type="described" ref="VSP_029858"/>
    </isoform>
</comment>
<evidence type="ECO:0000250" key="1">
    <source>
        <dbReference type="UniProtKB" id="Q3UYR4"/>
    </source>
</evidence>
<evidence type="ECO:0000255" key="2"/>
<evidence type="ECO:0000256" key="3">
    <source>
        <dbReference type="SAM" id="MobiDB-lite"/>
    </source>
</evidence>
<evidence type="ECO:0000269" key="4">
    <source>
    </source>
</evidence>
<evidence type="ECO:0000269" key="5">
    <source>
    </source>
</evidence>
<evidence type="ECO:0000303" key="6">
    <source>
    </source>
</evidence>
<evidence type="ECO:0000305" key="7"/>
<organism>
    <name type="scientific">Homo sapiens</name>
    <name type="common">Human</name>
    <dbReference type="NCBI Taxonomy" id="9606"/>
    <lineage>
        <taxon>Eukaryota</taxon>
        <taxon>Metazoa</taxon>
        <taxon>Chordata</taxon>
        <taxon>Craniata</taxon>
        <taxon>Vertebrata</taxon>
        <taxon>Euteleostomi</taxon>
        <taxon>Mammalia</taxon>
        <taxon>Eutheria</taxon>
        <taxon>Euarchontoglires</taxon>
        <taxon>Primates</taxon>
        <taxon>Haplorrhini</taxon>
        <taxon>Catarrhini</taxon>
        <taxon>Hominidae</taxon>
        <taxon>Homo</taxon>
    </lineage>
</organism>
<keyword id="KW-0009">Actin-binding</keyword>
<keyword id="KW-0025">Alternative splicing</keyword>
<keyword id="KW-0040">ANK repeat</keyword>
<keyword id="KW-0966">Cell projection</keyword>
<keyword id="KW-0175">Coiled coil</keyword>
<keyword id="KW-1009">Hearing</keyword>
<keyword id="KW-1267">Proteomics identification</keyword>
<keyword id="KW-1185">Reference proteome</keyword>
<keyword id="KW-0677">Repeat</keyword>
<feature type="chain" id="PRO_0000312511" description="Espin-like protein">
    <location>
        <begin position="1"/>
        <end position="1005"/>
    </location>
</feature>
<feature type="repeat" description="ANK 1">
    <location>
        <begin position="1"/>
        <end position="31"/>
    </location>
</feature>
<feature type="repeat" description="ANK 2">
    <location>
        <begin position="35"/>
        <end position="64"/>
    </location>
</feature>
<feature type="repeat" description="ANK 3">
    <location>
        <begin position="69"/>
        <end position="99"/>
    </location>
</feature>
<feature type="repeat" description="ANK 4">
    <location>
        <begin position="103"/>
        <end position="132"/>
    </location>
</feature>
<feature type="repeat" description="ANK 5">
    <location>
        <begin position="136"/>
        <end position="166"/>
    </location>
</feature>
<feature type="repeat" description="ANK 6">
    <location>
        <begin position="170"/>
        <end position="200"/>
    </location>
</feature>
<feature type="repeat" description="ANK 7">
    <location>
        <begin position="204"/>
        <end position="234"/>
    </location>
</feature>
<feature type="repeat" description="ANK 8">
    <location>
        <begin position="238"/>
        <end position="267"/>
    </location>
</feature>
<feature type="repeat" description="ANK 9">
    <location>
        <begin position="270"/>
        <end position="299"/>
    </location>
</feature>
<feature type="region of interest" description="Disordered" evidence="3">
    <location>
        <begin position="333"/>
        <end position="444"/>
    </location>
</feature>
<feature type="region of interest" description="Disordered" evidence="3">
    <location>
        <begin position="462"/>
        <end position="483"/>
    </location>
</feature>
<feature type="region of interest" description="Disordered" evidence="3">
    <location>
        <begin position="616"/>
        <end position="644"/>
    </location>
</feature>
<feature type="region of interest" description="Disordered" evidence="3">
    <location>
        <begin position="695"/>
        <end position="730"/>
    </location>
</feature>
<feature type="region of interest" description="Disordered" evidence="3">
    <location>
        <begin position="773"/>
        <end position="795"/>
    </location>
</feature>
<feature type="coiled-coil region" evidence="2">
    <location>
        <begin position="517"/>
        <end position="541"/>
    </location>
</feature>
<feature type="compositionally biased region" description="Pro residues" evidence="3">
    <location>
        <begin position="334"/>
        <end position="346"/>
    </location>
</feature>
<feature type="compositionally biased region" description="Polar residues" evidence="3">
    <location>
        <begin position="468"/>
        <end position="480"/>
    </location>
</feature>
<feature type="splice variant" id="VSP_029858" description="In isoform 3." evidence="6">
    <location>
        <begin position="1"/>
        <end position="368"/>
    </location>
</feature>
<feature type="splice variant" id="VSP_029859" description="In isoform 2." evidence="6">
    <location>
        <begin position="286"/>
        <end position="329"/>
    </location>
</feature>
<feature type="sequence variant" id="VAR_037535" description="In dbSNP:rs34046909.">
    <original>R</original>
    <variation>Q</variation>
    <location>
        <position position="167"/>
    </location>
</feature>
<feature type="sequence variant" id="VAR_037536" description="In dbSNP:rs13033248." evidence="4 5">
    <original>I</original>
    <variation>V</variation>
    <location>
        <position position="568"/>
    </location>
</feature>
<feature type="sequence variant" id="VAR_037537" description="In dbSNP:rs13006204." evidence="4 5">
    <original>A</original>
    <variation>S</variation>
    <location>
        <position position="574"/>
    </location>
</feature>
<feature type="sequence variant" id="VAR_037538" description="In dbSNP:rs4663845." evidence="4 5">
    <original>V</original>
    <variation>A</variation>
    <location>
        <position position="761"/>
    </location>
</feature>
<feature type="sequence variant" id="VAR_037539" description="In dbSNP:rs10172220." evidence="4">
    <original>Q</original>
    <variation>R</variation>
    <location>
        <position position="829"/>
    </location>
</feature>
<feature type="sequence conflict" description="In Ref. 1; BAC85884 and 3; AAH42051." evidence="7" ref="1 3">
    <original>V</original>
    <variation>M</variation>
    <location>
        <position position="610"/>
    </location>
</feature>
<feature type="sequence conflict" description="In Ref. 1; BAC85884." evidence="7" ref="1">
    <original>S</original>
    <variation>P</variation>
    <location>
        <position position="723"/>
    </location>
</feature>
<feature type="sequence conflict" description="In Ref. 1; BAC85884." evidence="7" ref="1">
    <original>A</original>
    <variation>T</variation>
    <location>
        <position position="955"/>
    </location>
</feature>